<feature type="chain" id="PRO_0000326486" description="Transmembrane protein 234 homolog">
    <location>
        <begin position="1"/>
        <end position="140"/>
    </location>
</feature>
<feature type="transmembrane region" description="Helical" evidence="1">
    <location>
        <begin position="14"/>
        <end position="34"/>
    </location>
</feature>
<feature type="transmembrane region" description="Helical" evidence="1">
    <location>
        <begin position="64"/>
        <end position="84"/>
    </location>
</feature>
<feature type="transmembrane region" description="Helical" evidence="1">
    <location>
        <begin position="88"/>
        <end position="108"/>
    </location>
</feature>
<feature type="transmembrane region" description="Helical" evidence="1">
    <location>
        <begin position="116"/>
        <end position="136"/>
    </location>
</feature>
<accession>A0NGI1</accession>
<dbReference type="EMBL" id="AAAB01008986">
    <property type="protein sequence ID" value="EAU75803.1"/>
    <property type="molecule type" value="Genomic_DNA"/>
</dbReference>
<dbReference type="FunCoup" id="A0NGI1">
    <property type="interactions" value="22"/>
</dbReference>
<dbReference type="STRING" id="7165.A0NGI1"/>
<dbReference type="PaxDb" id="7165-AGAP012180-PA"/>
<dbReference type="EnsemblMetazoa" id="AGAP012180-RA">
    <property type="protein sequence ID" value="AGAP012180-PA"/>
    <property type="gene ID" value="AGAP012180"/>
</dbReference>
<dbReference type="GeneID" id="4577632"/>
<dbReference type="KEGG" id="aga:4577632"/>
<dbReference type="VEuPathDB" id="VectorBase:AGAMI1_014302"/>
<dbReference type="VEuPathDB" id="VectorBase:AGAP012180"/>
<dbReference type="eggNOG" id="KOG4831">
    <property type="taxonomic scope" value="Eukaryota"/>
</dbReference>
<dbReference type="HOGENOM" id="CLU_108086_2_1_1"/>
<dbReference type="InParanoid" id="A0NGI1"/>
<dbReference type="OMA" id="LGEWYAE"/>
<dbReference type="OrthoDB" id="43458at2759"/>
<dbReference type="PhylomeDB" id="A0NGI1"/>
<dbReference type="Proteomes" id="UP000007062">
    <property type="component" value="Chromosome 3L"/>
</dbReference>
<dbReference type="GO" id="GO:0016020">
    <property type="term" value="C:membrane"/>
    <property type="evidence" value="ECO:0007669"/>
    <property type="project" value="UniProtKB-SubCell"/>
</dbReference>
<dbReference type="Gene3D" id="1.10.3730.20">
    <property type="match status" value="1"/>
</dbReference>
<dbReference type="InterPro" id="IPR018908">
    <property type="entry name" value="TMEM234"/>
</dbReference>
<dbReference type="PANTHER" id="PTHR28668">
    <property type="entry name" value="TRANSMEMBRANE PROTEIN 234"/>
    <property type="match status" value="1"/>
</dbReference>
<dbReference type="PANTHER" id="PTHR28668:SF1">
    <property type="entry name" value="TRANSMEMBRANE PROTEIN 234"/>
    <property type="match status" value="1"/>
</dbReference>
<dbReference type="Pfam" id="PF10639">
    <property type="entry name" value="TMEM234"/>
    <property type="match status" value="1"/>
</dbReference>
<dbReference type="SUPFAM" id="SSF103481">
    <property type="entry name" value="Multidrug resistance efflux transporter EmrE"/>
    <property type="match status" value="1"/>
</dbReference>
<keyword id="KW-0472">Membrane</keyword>
<keyword id="KW-1185">Reference proteome</keyword>
<keyword id="KW-0812">Transmembrane</keyword>
<keyword id="KW-1133">Transmembrane helix</keyword>
<name>TM234_ANOGA</name>
<organism>
    <name type="scientific">Anopheles gambiae</name>
    <name type="common">African malaria mosquito</name>
    <dbReference type="NCBI Taxonomy" id="7165"/>
    <lineage>
        <taxon>Eukaryota</taxon>
        <taxon>Metazoa</taxon>
        <taxon>Ecdysozoa</taxon>
        <taxon>Arthropoda</taxon>
        <taxon>Hexapoda</taxon>
        <taxon>Insecta</taxon>
        <taxon>Pterygota</taxon>
        <taxon>Neoptera</taxon>
        <taxon>Endopterygota</taxon>
        <taxon>Diptera</taxon>
        <taxon>Nematocera</taxon>
        <taxon>Culicoidea</taxon>
        <taxon>Culicidae</taxon>
        <taxon>Anophelinae</taxon>
        <taxon>Anopheles</taxon>
    </lineage>
</organism>
<comment type="subcellular location">
    <subcellularLocation>
        <location evidence="2">Membrane</location>
        <topology evidence="2">Multi-pass membrane protein</topology>
    </subcellularLocation>
</comment>
<comment type="similarity">
    <text evidence="2">Belongs to the TMEM234 family.</text>
</comment>
<sequence>MDSPENTVPASVDIYAVLSILLVAIMWGATNPFIKRGSIGYNELKADSKLGQLWLEVRFLITRWQYLLPLVINQLGSIVYVLTLQRTELSLTVPMANSLTFVFTAITARLLGERQSGWKIYCGMTLVILGTVICGLDKML</sequence>
<reference key="1">
    <citation type="journal article" date="2002" name="Science">
        <title>The genome sequence of the malaria mosquito Anopheles gambiae.</title>
        <authorList>
            <person name="Holt R.A."/>
            <person name="Subramanian G.M."/>
            <person name="Halpern A."/>
            <person name="Sutton G.G."/>
            <person name="Charlab R."/>
            <person name="Nusskern D.R."/>
            <person name="Wincker P."/>
            <person name="Clark A.G."/>
            <person name="Ribeiro J.M.C."/>
            <person name="Wides R."/>
            <person name="Salzberg S.L."/>
            <person name="Loftus B.J."/>
            <person name="Yandell M.D."/>
            <person name="Majoros W.H."/>
            <person name="Rusch D.B."/>
            <person name="Lai Z."/>
            <person name="Kraft C.L."/>
            <person name="Abril J.F."/>
            <person name="Anthouard V."/>
            <person name="Arensburger P."/>
            <person name="Atkinson P.W."/>
            <person name="Baden H."/>
            <person name="de Berardinis V."/>
            <person name="Baldwin D."/>
            <person name="Benes V."/>
            <person name="Biedler J."/>
            <person name="Blass C."/>
            <person name="Bolanos R."/>
            <person name="Boscus D."/>
            <person name="Barnstead M."/>
            <person name="Cai S."/>
            <person name="Center A."/>
            <person name="Chaturverdi K."/>
            <person name="Christophides G.K."/>
            <person name="Chrystal M.A.M."/>
            <person name="Clamp M."/>
            <person name="Cravchik A."/>
            <person name="Curwen V."/>
            <person name="Dana A."/>
            <person name="Delcher A."/>
            <person name="Dew I."/>
            <person name="Evans C.A."/>
            <person name="Flanigan M."/>
            <person name="Grundschober-Freimoser A."/>
            <person name="Friedli L."/>
            <person name="Gu Z."/>
            <person name="Guan P."/>
            <person name="Guigo R."/>
            <person name="Hillenmeyer M.E."/>
            <person name="Hladun S.L."/>
            <person name="Hogan J.R."/>
            <person name="Hong Y.S."/>
            <person name="Hoover J."/>
            <person name="Jaillon O."/>
            <person name="Ke Z."/>
            <person name="Kodira C.D."/>
            <person name="Kokoza E."/>
            <person name="Koutsos A."/>
            <person name="Letunic I."/>
            <person name="Levitsky A.A."/>
            <person name="Liang Y."/>
            <person name="Lin J.-J."/>
            <person name="Lobo N.F."/>
            <person name="Lopez J.R."/>
            <person name="Malek J.A."/>
            <person name="McIntosh T.C."/>
            <person name="Meister S."/>
            <person name="Miller J.R."/>
            <person name="Mobarry C."/>
            <person name="Mongin E."/>
            <person name="Murphy S.D."/>
            <person name="O'Brochta D.A."/>
            <person name="Pfannkoch C."/>
            <person name="Qi R."/>
            <person name="Regier M.A."/>
            <person name="Remington K."/>
            <person name="Shao H."/>
            <person name="Sharakhova M.V."/>
            <person name="Sitter C.D."/>
            <person name="Shetty J."/>
            <person name="Smith T.J."/>
            <person name="Strong R."/>
            <person name="Sun J."/>
            <person name="Thomasova D."/>
            <person name="Ton L.Q."/>
            <person name="Topalis P."/>
            <person name="Tu Z.J."/>
            <person name="Unger M.F."/>
            <person name="Walenz B."/>
            <person name="Wang A.H."/>
            <person name="Wang J."/>
            <person name="Wang M."/>
            <person name="Wang X."/>
            <person name="Woodford K.J."/>
            <person name="Wortman J.R."/>
            <person name="Wu M."/>
            <person name="Yao A."/>
            <person name="Zdobnov E.M."/>
            <person name="Zhang H."/>
            <person name="Zhao Q."/>
            <person name="Zhao S."/>
            <person name="Zhu S.C."/>
            <person name="Zhimulev I."/>
            <person name="Coluzzi M."/>
            <person name="della Torre A."/>
            <person name="Roth C.W."/>
            <person name="Louis C."/>
            <person name="Kalush F."/>
            <person name="Mural R.J."/>
            <person name="Myers E.W."/>
            <person name="Adams M.D."/>
            <person name="Smith H.O."/>
            <person name="Broder S."/>
            <person name="Gardner M.J."/>
            <person name="Fraser C.M."/>
            <person name="Birney E."/>
            <person name="Bork P."/>
            <person name="Brey P.T."/>
            <person name="Venter J.C."/>
            <person name="Weissenbach J."/>
            <person name="Kafatos F.C."/>
            <person name="Collins F.H."/>
            <person name="Hoffman S.L."/>
        </authorList>
    </citation>
    <scope>NUCLEOTIDE SEQUENCE [LARGE SCALE GENOMIC DNA]</scope>
    <source>
        <strain>PEST</strain>
    </source>
</reference>
<proteinExistence type="inferred from homology"/>
<gene>
    <name type="ORF">AGAP012180</name>
</gene>
<evidence type="ECO:0000255" key="1"/>
<evidence type="ECO:0000305" key="2"/>
<protein>
    <recommendedName>
        <fullName>Transmembrane protein 234 homolog</fullName>
    </recommendedName>
</protein>